<reference key="1">
    <citation type="journal article" date="2005" name="Science">
        <title>The transcriptional landscape of the mammalian genome.</title>
        <authorList>
            <person name="Carninci P."/>
            <person name="Kasukawa T."/>
            <person name="Katayama S."/>
            <person name="Gough J."/>
            <person name="Frith M.C."/>
            <person name="Maeda N."/>
            <person name="Oyama R."/>
            <person name="Ravasi T."/>
            <person name="Lenhard B."/>
            <person name="Wells C."/>
            <person name="Kodzius R."/>
            <person name="Shimokawa K."/>
            <person name="Bajic V.B."/>
            <person name="Brenner S.E."/>
            <person name="Batalov S."/>
            <person name="Forrest A.R."/>
            <person name="Zavolan M."/>
            <person name="Davis M.J."/>
            <person name="Wilming L.G."/>
            <person name="Aidinis V."/>
            <person name="Allen J.E."/>
            <person name="Ambesi-Impiombato A."/>
            <person name="Apweiler R."/>
            <person name="Aturaliya R.N."/>
            <person name="Bailey T.L."/>
            <person name="Bansal M."/>
            <person name="Baxter L."/>
            <person name="Beisel K.W."/>
            <person name="Bersano T."/>
            <person name="Bono H."/>
            <person name="Chalk A.M."/>
            <person name="Chiu K.P."/>
            <person name="Choudhary V."/>
            <person name="Christoffels A."/>
            <person name="Clutterbuck D.R."/>
            <person name="Crowe M.L."/>
            <person name="Dalla E."/>
            <person name="Dalrymple B.P."/>
            <person name="de Bono B."/>
            <person name="Della Gatta G."/>
            <person name="di Bernardo D."/>
            <person name="Down T."/>
            <person name="Engstrom P."/>
            <person name="Fagiolini M."/>
            <person name="Faulkner G."/>
            <person name="Fletcher C.F."/>
            <person name="Fukushima T."/>
            <person name="Furuno M."/>
            <person name="Futaki S."/>
            <person name="Gariboldi M."/>
            <person name="Georgii-Hemming P."/>
            <person name="Gingeras T.R."/>
            <person name="Gojobori T."/>
            <person name="Green R.E."/>
            <person name="Gustincich S."/>
            <person name="Harbers M."/>
            <person name="Hayashi Y."/>
            <person name="Hensch T.K."/>
            <person name="Hirokawa N."/>
            <person name="Hill D."/>
            <person name="Huminiecki L."/>
            <person name="Iacono M."/>
            <person name="Ikeo K."/>
            <person name="Iwama A."/>
            <person name="Ishikawa T."/>
            <person name="Jakt M."/>
            <person name="Kanapin A."/>
            <person name="Katoh M."/>
            <person name="Kawasawa Y."/>
            <person name="Kelso J."/>
            <person name="Kitamura H."/>
            <person name="Kitano H."/>
            <person name="Kollias G."/>
            <person name="Krishnan S.P."/>
            <person name="Kruger A."/>
            <person name="Kummerfeld S.K."/>
            <person name="Kurochkin I.V."/>
            <person name="Lareau L.F."/>
            <person name="Lazarevic D."/>
            <person name="Lipovich L."/>
            <person name="Liu J."/>
            <person name="Liuni S."/>
            <person name="McWilliam S."/>
            <person name="Madan Babu M."/>
            <person name="Madera M."/>
            <person name="Marchionni L."/>
            <person name="Matsuda H."/>
            <person name="Matsuzawa S."/>
            <person name="Miki H."/>
            <person name="Mignone F."/>
            <person name="Miyake S."/>
            <person name="Morris K."/>
            <person name="Mottagui-Tabar S."/>
            <person name="Mulder N."/>
            <person name="Nakano N."/>
            <person name="Nakauchi H."/>
            <person name="Ng P."/>
            <person name="Nilsson R."/>
            <person name="Nishiguchi S."/>
            <person name="Nishikawa S."/>
            <person name="Nori F."/>
            <person name="Ohara O."/>
            <person name="Okazaki Y."/>
            <person name="Orlando V."/>
            <person name="Pang K.C."/>
            <person name="Pavan W.J."/>
            <person name="Pavesi G."/>
            <person name="Pesole G."/>
            <person name="Petrovsky N."/>
            <person name="Piazza S."/>
            <person name="Reed J."/>
            <person name="Reid J.F."/>
            <person name="Ring B.Z."/>
            <person name="Ringwald M."/>
            <person name="Rost B."/>
            <person name="Ruan Y."/>
            <person name="Salzberg S.L."/>
            <person name="Sandelin A."/>
            <person name="Schneider C."/>
            <person name="Schoenbach C."/>
            <person name="Sekiguchi K."/>
            <person name="Semple C.A."/>
            <person name="Seno S."/>
            <person name="Sessa L."/>
            <person name="Sheng Y."/>
            <person name="Shibata Y."/>
            <person name="Shimada H."/>
            <person name="Shimada K."/>
            <person name="Silva D."/>
            <person name="Sinclair B."/>
            <person name="Sperling S."/>
            <person name="Stupka E."/>
            <person name="Sugiura K."/>
            <person name="Sultana R."/>
            <person name="Takenaka Y."/>
            <person name="Taki K."/>
            <person name="Tammoja K."/>
            <person name="Tan S.L."/>
            <person name="Tang S."/>
            <person name="Taylor M.S."/>
            <person name="Tegner J."/>
            <person name="Teichmann S.A."/>
            <person name="Ueda H.R."/>
            <person name="van Nimwegen E."/>
            <person name="Verardo R."/>
            <person name="Wei C.L."/>
            <person name="Yagi K."/>
            <person name="Yamanishi H."/>
            <person name="Zabarovsky E."/>
            <person name="Zhu S."/>
            <person name="Zimmer A."/>
            <person name="Hide W."/>
            <person name="Bult C."/>
            <person name="Grimmond S.M."/>
            <person name="Teasdale R.D."/>
            <person name="Liu E.T."/>
            <person name="Brusic V."/>
            <person name="Quackenbush J."/>
            <person name="Wahlestedt C."/>
            <person name="Mattick J.S."/>
            <person name="Hume D.A."/>
            <person name="Kai C."/>
            <person name="Sasaki D."/>
            <person name="Tomaru Y."/>
            <person name="Fukuda S."/>
            <person name="Kanamori-Katayama M."/>
            <person name="Suzuki M."/>
            <person name="Aoki J."/>
            <person name="Arakawa T."/>
            <person name="Iida J."/>
            <person name="Imamura K."/>
            <person name="Itoh M."/>
            <person name="Kato T."/>
            <person name="Kawaji H."/>
            <person name="Kawagashira N."/>
            <person name="Kawashima T."/>
            <person name="Kojima M."/>
            <person name="Kondo S."/>
            <person name="Konno H."/>
            <person name="Nakano K."/>
            <person name="Ninomiya N."/>
            <person name="Nishio T."/>
            <person name="Okada M."/>
            <person name="Plessy C."/>
            <person name="Shibata K."/>
            <person name="Shiraki T."/>
            <person name="Suzuki S."/>
            <person name="Tagami M."/>
            <person name="Waki K."/>
            <person name="Watahiki A."/>
            <person name="Okamura-Oho Y."/>
            <person name="Suzuki H."/>
            <person name="Kawai J."/>
            <person name="Hayashizaki Y."/>
        </authorList>
    </citation>
    <scope>NUCLEOTIDE SEQUENCE [LARGE SCALE MRNA] (ISOFORMS 2 AND 3)</scope>
    <source>
        <strain>C57BL/6J</strain>
        <strain>NOD</strain>
        <tissue>Spleen</tissue>
    </source>
</reference>
<reference key="2">
    <citation type="journal article" date="2004" name="Genome Res.">
        <title>The status, quality, and expansion of the NIH full-length cDNA project: the Mammalian Gene Collection (MGC).</title>
        <authorList>
            <consortium name="The MGC Project Team"/>
        </authorList>
    </citation>
    <scope>NUCLEOTIDE SEQUENCE [LARGE SCALE MRNA] (ISOFORM 1)</scope>
    <source>
        <strain>C57BL/6J</strain>
        <tissue>Brain</tissue>
    </source>
</reference>
<reference key="3">
    <citation type="journal article" date="2010" name="Cell">
        <title>A tissue-specific atlas of mouse protein phosphorylation and expression.</title>
        <authorList>
            <person name="Huttlin E.L."/>
            <person name="Jedrychowski M.P."/>
            <person name="Elias J.E."/>
            <person name="Goswami T."/>
            <person name="Rad R."/>
            <person name="Beausoleil S.A."/>
            <person name="Villen J."/>
            <person name="Haas W."/>
            <person name="Sowa M.E."/>
            <person name="Gygi S.P."/>
        </authorList>
    </citation>
    <scope>PHOSPHORYLATION [LARGE SCALE ANALYSIS] AT SER-904 AND SER-907</scope>
    <scope>IDENTIFICATION BY MASS SPECTROMETRY [LARGE SCALE ANALYSIS]</scope>
    <source>
        <tissue>Kidney</tissue>
    </source>
</reference>
<evidence type="ECO:0000250" key="1">
    <source>
        <dbReference type="UniProtKB" id="Q6N043"/>
    </source>
</evidence>
<evidence type="ECO:0000255" key="2">
    <source>
        <dbReference type="PROSITE-ProRule" id="PRU00042"/>
    </source>
</evidence>
<evidence type="ECO:0000256" key="3">
    <source>
        <dbReference type="SAM" id="MobiDB-lite"/>
    </source>
</evidence>
<evidence type="ECO:0000303" key="4">
    <source>
    </source>
</evidence>
<evidence type="ECO:0000305" key="5"/>
<evidence type="ECO:0007744" key="6">
    <source>
    </source>
</evidence>
<proteinExistence type="evidence at protein level"/>
<feature type="chain" id="PRO_0000227978" description="Zinc finger protein 280D">
    <location>
        <begin position="1"/>
        <end position="974"/>
    </location>
</feature>
<feature type="zinc finger region" description="C2H2-type 1" evidence="2">
    <location>
        <begin position="333"/>
        <end position="355"/>
    </location>
</feature>
<feature type="zinc finger region" description="C2H2-type 2" evidence="2">
    <location>
        <begin position="370"/>
        <end position="393"/>
    </location>
</feature>
<feature type="zinc finger region" description="C2H2-type 3; degenerate" evidence="2">
    <location>
        <begin position="400"/>
        <end position="424"/>
    </location>
</feature>
<feature type="zinc finger region" description="C2H2-type 4" evidence="2">
    <location>
        <begin position="430"/>
        <end position="453"/>
    </location>
</feature>
<feature type="zinc finger region" description="C2H2-type 5" evidence="2">
    <location>
        <begin position="459"/>
        <end position="481"/>
    </location>
</feature>
<feature type="region of interest" description="Disordered" evidence="3">
    <location>
        <begin position="188"/>
        <end position="216"/>
    </location>
</feature>
<feature type="region of interest" description="Disordered" evidence="3">
    <location>
        <begin position="507"/>
        <end position="624"/>
    </location>
</feature>
<feature type="region of interest" description="Disordered" evidence="3">
    <location>
        <begin position="751"/>
        <end position="797"/>
    </location>
</feature>
<feature type="region of interest" description="Disordered" evidence="3">
    <location>
        <begin position="815"/>
        <end position="974"/>
    </location>
</feature>
<feature type="compositionally biased region" description="Low complexity" evidence="3">
    <location>
        <begin position="539"/>
        <end position="557"/>
    </location>
</feature>
<feature type="compositionally biased region" description="Polar residues" evidence="3">
    <location>
        <begin position="571"/>
        <end position="587"/>
    </location>
</feature>
<feature type="compositionally biased region" description="Low complexity" evidence="3">
    <location>
        <begin position="591"/>
        <end position="611"/>
    </location>
</feature>
<feature type="compositionally biased region" description="Polar residues" evidence="3">
    <location>
        <begin position="612"/>
        <end position="624"/>
    </location>
</feature>
<feature type="compositionally biased region" description="Basic and acidic residues" evidence="3">
    <location>
        <begin position="763"/>
        <end position="775"/>
    </location>
</feature>
<feature type="compositionally biased region" description="Polar residues" evidence="3">
    <location>
        <begin position="817"/>
        <end position="829"/>
    </location>
</feature>
<feature type="compositionally biased region" description="Basic and acidic residues" evidence="3">
    <location>
        <begin position="830"/>
        <end position="860"/>
    </location>
</feature>
<feature type="compositionally biased region" description="Polar residues" evidence="3">
    <location>
        <begin position="861"/>
        <end position="884"/>
    </location>
</feature>
<feature type="compositionally biased region" description="Polar residues" evidence="3">
    <location>
        <begin position="938"/>
        <end position="950"/>
    </location>
</feature>
<feature type="modified residue" description="Phosphoserine" evidence="1">
    <location>
        <position position="557"/>
    </location>
</feature>
<feature type="modified residue" description="Phosphoserine" evidence="6">
    <location>
        <position position="904"/>
    </location>
</feature>
<feature type="modified residue" description="Phosphoserine" evidence="6">
    <location>
        <position position="907"/>
    </location>
</feature>
<feature type="cross-link" description="Glycyl lysine isopeptide (Lys-Gly) (interchain with G-Cter in SUMO2)" evidence="1">
    <location>
        <position position="44"/>
    </location>
</feature>
<feature type="cross-link" description="Glycyl lysine isopeptide (Lys-Gly) (interchain with G-Cter in SUMO2)" evidence="1">
    <location>
        <position position="46"/>
    </location>
</feature>
<feature type="cross-link" description="Glycyl lysine isopeptide (Lys-Gly) (interchain with G-Cter in SUMO2)" evidence="1">
    <location>
        <position position="86"/>
    </location>
</feature>
<feature type="cross-link" description="Glycyl lysine isopeptide (Lys-Gly) (interchain with G-Cter in SUMO2)" evidence="1">
    <location>
        <position position="99"/>
    </location>
</feature>
<feature type="cross-link" description="Glycyl lysine isopeptide (Lys-Gly) (interchain with G-Cter in SUMO2)" evidence="1">
    <location>
        <position position="138"/>
    </location>
</feature>
<feature type="cross-link" description="Glycyl lysine isopeptide (Lys-Gly) (interchain with G-Cter in SUMO2)" evidence="1">
    <location>
        <position position="201"/>
    </location>
</feature>
<feature type="cross-link" description="Glycyl lysine isopeptide (Lys-Gly) (interchain with G-Cter in SUMO2)" evidence="1">
    <location>
        <position position="222"/>
    </location>
</feature>
<feature type="cross-link" description="Glycyl lysine isopeptide (Lys-Gly) (interchain with G-Cter in SUMO2)" evidence="1">
    <location>
        <position position="245"/>
    </location>
</feature>
<feature type="cross-link" description="Glycyl lysine isopeptide (Lys-Gly) (interchain with G-Cter in SUMO2)" evidence="1">
    <location>
        <position position="287"/>
    </location>
</feature>
<feature type="cross-link" description="Glycyl lysine isopeptide (Lys-Gly) (interchain with G-Cter in SUMO2)" evidence="1">
    <location>
        <position position="304"/>
    </location>
</feature>
<feature type="cross-link" description="Glycyl lysine isopeptide (Lys-Gly) (interchain with G-Cter in SUMO2)" evidence="1">
    <location>
        <position position="752"/>
    </location>
</feature>
<feature type="splice variant" id="VSP_017629" description="In isoform 3." evidence="4">
    <location>
        <begin position="1"/>
        <end position="270"/>
    </location>
</feature>
<feature type="splice variant" id="VSP_017630" description="In isoform 2." evidence="4">
    <original>IKTEAPTKGQEPVSKETARHSRAEGEPGASHSGSKQD</original>
    <variation>CRSSPEISKHVQGVPGQCPLRWTQVLPVLSFPGMRMN</variation>
    <location>
        <begin position="751"/>
        <end position="787"/>
    </location>
</feature>
<feature type="splice variant" id="VSP_017631" description="In isoform 3." evidence="4">
    <original>S</original>
    <variation>R</variation>
    <location>
        <position position="784"/>
    </location>
</feature>
<feature type="splice variant" id="VSP_017632" description="In isoform 3." evidence="4">
    <location>
        <begin position="785"/>
        <end position="974"/>
    </location>
</feature>
<feature type="splice variant" id="VSP_017633" description="In isoform 2." evidence="4">
    <location>
        <begin position="788"/>
        <end position="974"/>
    </location>
</feature>
<accession>Q68FE8</accession>
<accession>Q3T9B1</accession>
<accession>Q8BI82</accession>
<dbReference type="EMBL" id="AK045173">
    <property type="protein sequence ID" value="BAC32247.1"/>
    <property type="molecule type" value="mRNA"/>
</dbReference>
<dbReference type="EMBL" id="AK172652">
    <property type="protein sequence ID" value="BAE43113.1"/>
    <property type="molecule type" value="mRNA"/>
</dbReference>
<dbReference type="EMBL" id="BC079878">
    <property type="protein sequence ID" value="AAH79878.1"/>
    <property type="molecule type" value="mRNA"/>
</dbReference>
<dbReference type="CCDS" id="CCDS40683.1">
    <molecule id="Q68FE8-1"/>
</dbReference>
<dbReference type="RefSeq" id="NP_001298034.1">
    <property type="nucleotide sequence ID" value="NM_001311105.1"/>
</dbReference>
<dbReference type="RefSeq" id="NP_666336.3">
    <molecule id="Q68FE8-1"/>
    <property type="nucleotide sequence ID" value="NM_146224.5"/>
</dbReference>
<dbReference type="RefSeq" id="XP_006511183.1">
    <property type="nucleotide sequence ID" value="XM_006511120.2"/>
</dbReference>
<dbReference type="BioGRID" id="231667">
    <property type="interactions" value="5"/>
</dbReference>
<dbReference type="FunCoup" id="Q68FE8">
    <property type="interactions" value="3416"/>
</dbReference>
<dbReference type="STRING" id="10090.ENSMUSP00000096175"/>
<dbReference type="GlyGen" id="Q68FE8">
    <property type="glycosylation" value="2 sites, 1 N-linked glycan (1 site)"/>
</dbReference>
<dbReference type="iPTMnet" id="Q68FE8"/>
<dbReference type="PhosphoSitePlus" id="Q68FE8"/>
<dbReference type="SwissPalm" id="Q68FE8"/>
<dbReference type="jPOST" id="Q68FE8"/>
<dbReference type="PaxDb" id="10090-ENSMUSP00000096175"/>
<dbReference type="PeptideAtlas" id="Q68FE8"/>
<dbReference type="ProteomicsDB" id="302095">
    <molecule id="Q68FE8-1"/>
</dbReference>
<dbReference type="ProteomicsDB" id="302096">
    <molecule id="Q68FE8-2"/>
</dbReference>
<dbReference type="ProteomicsDB" id="302097">
    <molecule id="Q68FE8-3"/>
</dbReference>
<dbReference type="Pumba" id="Q68FE8"/>
<dbReference type="DNASU" id="235469"/>
<dbReference type="Ensembl" id="ENSMUST00000098576.10">
    <molecule id="Q68FE8-1"/>
    <property type="protein sequence ID" value="ENSMUSP00000096175.3"/>
    <property type="gene ID" value="ENSMUSG00000038535.18"/>
</dbReference>
<dbReference type="Ensembl" id="ENSMUST00000184517.8">
    <molecule id="Q68FE8-2"/>
    <property type="protein sequence ID" value="ENSMUSP00000138970.2"/>
    <property type="gene ID" value="ENSMUSG00000038535.18"/>
</dbReference>
<dbReference type="GeneID" id="235469"/>
<dbReference type="KEGG" id="mmu:235469"/>
<dbReference type="UCSC" id="uc009qpo.1">
    <molecule id="Q68FE8-2"/>
    <property type="organism name" value="mouse"/>
</dbReference>
<dbReference type="UCSC" id="uc009qpp.1">
    <molecule id="Q68FE8-3"/>
    <property type="organism name" value="mouse"/>
</dbReference>
<dbReference type="UCSC" id="uc009qpq.1">
    <molecule id="Q68FE8-1"/>
    <property type="organism name" value="mouse"/>
</dbReference>
<dbReference type="AGR" id="MGI:2384583"/>
<dbReference type="CTD" id="235469"/>
<dbReference type="MGI" id="MGI:2384583">
    <property type="gene designation" value="Zfp280d"/>
</dbReference>
<dbReference type="VEuPathDB" id="HostDB:ENSMUSG00000038535"/>
<dbReference type="eggNOG" id="KOG1721">
    <property type="taxonomic scope" value="Eukaryota"/>
</dbReference>
<dbReference type="GeneTree" id="ENSGT00940000158889"/>
<dbReference type="HOGENOM" id="CLU_010097_1_0_1"/>
<dbReference type="InParanoid" id="Q68FE8"/>
<dbReference type="OMA" id="CDANAFE"/>
<dbReference type="OrthoDB" id="10032537at2759"/>
<dbReference type="PhylomeDB" id="Q68FE8"/>
<dbReference type="TreeFam" id="TF331707"/>
<dbReference type="BioGRID-ORCS" id="235469">
    <property type="hits" value="1 hit in 76 CRISPR screens"/>
</dbReference>
<dbReference type="ChiTaRS" id="Zfp280d">
    <property type="organism name" value="mouse"/>
</dbReference>
<dbReference type="PRO" id="PR:Q68FE8"/>
<dbReference type="Proteomes" id="UP000000589">
    <property type="component" value="Chromosome 9"/>
</dbReference>
<dbReference type="RNAct" id="Q68FE8">
    <property type="molecule type" value="protein"/>
</dbReference>
<dbReference type="Bgee" id="ENSMUSG00000038535">
    <property type="expression patterns" value="Expressed in undifferentiated genital tubercle and 260 other cell types or tissues"/>
</dbReference>
<dbReference type="ExpressionAtlas" id="Q68FE8">
    <property type="expression patterns" value="baseline and differential"/>
</dbReference>
<dbReference type="GO" id="GO:0005634">
    <property type="term" value="C:nucleus"/>
    <property type="evidence" value="ECO:0007669"/>
    <property type="project" value="UniProtKB-SubCell"/>
</dbReference>
<dbReference type="GO" id="GO:0003677">
    <property type="term" value="F:DNA binding"/>
    <property type="evidence" value="ECO:0007669"/>
    <property type="project" value="UniProtKB-KW"/>
</dbReference>
<dbReference type="GO" id="GO:0008270">
    <property type="term" value="F:zinc ion binding"/>
    <property type="evidence" value="ECO:0007669"/>
    <property type="project" value="UniProtKB-KW"/>
</dbReference>
<dbReference type="FunFam" id="3.30.160.60:FF:000298">
    <property type="entry name" value="zinc finger protein 280D isoform X1"/>
    <property type="match status" value="1"/>
</dbReference>
<dbReference type="Gene3D" id="3.30.160.60">
    <property type="entry name" value="Classic Zinc Finger"/>
    <property type="match status" value="1"/>
</dbReference>
<dbReference type="InterPro" id="IPR025243">
    <property type="entry name" value="DUF4195"/>
</dbReference>
<dbReference type="InterPro" id="IPR050527">
    <property type="entry name" value="Snail/Krueppel_Znf"/>
</dbReference>
<dbReference type="InterPro" id="IPR036236">
    <property type="entry name" value="Znf_C2H2_sf"/>
</dbReference>
<dbReference type="InterPro" id="IPR013087">
    <property type="entry name" value="Znf_C2H2_type"/>
</dbReference>
<dbReference type="PANTHER" id="PTHR24388">
    <property type="entry name" value="ZINC FINGER PROTEIN"/>
    <property type="match status" value="1"/>
</dbReference>
<dbReference type="PANTHER" id="PTHR24388:SF34">
    <property type="entry name" value="ZINC FINGER PROTEIN 280D"/>
    <property type="match status" value="1"/>
</dbReference>
<dbReference type="Pfam" id="PF13836">
    <property type="entry name" value="DUF4195"/>
    <property type="match status" value="1"/>
</dbReference>
<dbReference type="Pfam" id="PF25414">
    <property type="entry name" value="zf-C2H2_Z280C_D"/>
    <property type="match status" value="1"/>
</dbReference>
<dbReference type="Pfam" id="PF25429">
    <property type="entry name" value="zf-POGZ"/>
    <property type="match status" value="1"/>
</dbReference>
<dbReference type="SMART" id="SM00355">
    <property type="entry name" value="ZnF_C2H2"/>
    <property type="match status" value="9"/>
</dbReference>
<dbReference type="SUPFAM" id="SSF57667">
    <property type="entry name" value="beta-beta-alpha zinc fingers"/>
    <property type="match status" value="1"/>
</dbReference>
<dbReference type="PROSITE" id="PS00028">
    <property type="entry name" value="ZINC_FINGER_C2H2_1"/>
    <property type="match status" value="5"/>
</dbReference>
<dbReference type="PROSITE" id="PS50157">
    <property type="entry name" value="ZINC_FINGER_C2H2_2"/>
    <property type="match status" value="1"/>
</dbReference>
<gene>
    <name type="primary">Znf280d</name>
    <name type="synonym">Suhw4</name>
    <name type="synonym">Zfp280d</name>
</gene>
<comment type="function">
    <text>May function as a transcription factor.</text>
</comment>
<comment type="subcellular location">
    <subcellularLocation>
        <location evidence="5">Nucleus</location>
    </subcellularLocation>
</comment>
<comment type="alternative products">
    <event type="alternative splicing"/>
    <isoform>
        <id>Q68FE8-1</id>
        <name>1</name>
        <sequence type="displayed"/>
    </isoform>
    <isoform>
        <id>Q68FE8-2</id>
        <name>2</name>
        <sequence type="described" ref="VSP_017630 VSP_017633"/>
    </isoform>
    <isoform>
        <id>Q68FE8-3</id>
        <name>3</name>
        <sequence type="described" ref="VSP_017629 VSP_017631 VSP_017632"/>
    </isoform>
</comment>
<sequence>MVTTYIKSDLQLDGRQFFQPKDNLKMAELFMECEEEELEPWQKKVKEVEEDDDDEPIFVAEIASSKPAISNILNRVNPSSHSRGIKNGILNRGFTASFKPTSQRCLNSASNPVAALPVNFHPESRSSDSSVIVQPFSKPGYVTNSPRVLSNNSSELLFDLTQDTGLSHYQGGPTLSIAGLNETSFLSKRPSGSDISSVNPKKPKPSENTSGIDASSVISSEKSPSVISLQVVPSQGANCSSSQSKNGTTFPRACPKCDIHFNLLDPLKNHMTYCCPDMINNFLGLTKADNLNSANEAKTLESEKGKLIMLVNDFYYGKHEGDVLEEQKTHTTFKCFSCLKVLKNNIRFMNHMKHHLELEKQSSESWEKHTTCQHCYRQFPTPFQLQCHIESTHTPHEFSTICKICELSFETEQILLQHMKDNHKPGEMPYICQVCNYRSSLFSEVESHFRTSHENTKNLLCPFCLKVIKIATPYMHHYMKHQKKGIHRCTKCRLQFLTCKEKMDHKTQHHRTFVKPKQLEGLPPGTKVTIRASVGPLQSGSSVTPSISPSTSTLQLSPPEPDNVTAKNHVKLTTSTPNTTISDPSKANETKSNGSKSKNKSKVSNMQKKQSTLSSSNKKSKVNTALRNLRLRRGVHECIECSSEVKDFANHFPTYVHCSFCRYNTSCSKAYVNHMMSFHSNRPSKRYCIFKKHSENLRGISLVCLNCDFLTDVSGLDNMATHLSQHETHSCRVLVEQVSVCIPTSERLSEIKTEAPTKGQEPVSKETARHSRAEGEPGASHSGSKQDKVPSSEEGTGCDASVCEAAAATHCEKDVTVSDTENVSSSKNILSHDPDVGTDTMEKEEKTHHACQEMELKVDQSSESTNPTEAELSSETRQGLQLTSGDVGIDQFLRQGDEPKSVNSDASDPGSVRLEPLTPSEVLEYEATEILHDGDDPSANTSDTVSDQTGGSPGGSNPCRAETAVDLADGEERS</sequence>
<name>Z280D_MOUSE</name>
<keyword id="KW-0025">Alternative splicing</keyword>
<keyword id="KW-0238">DNA-binding</keyword>
<keyword id="KW-1017">Isopeptide bond</keyword>
<keyword id="KW-0479">Metal-binding</keyword>
<keyword id="KW-0539">Nucleus</keyword>
<keyword id="KW-0597">Phosphoprotein</keyword>
<keyword id="KW-1185">Reference proteome</keyword>
<keyword id="KW-0677">Repeat</keyword>
<keyword id="KW-0804">Transcription</keyword>
<keyword id="KW-0805">Transcription regulation</keyword>
<keyword id="KW-0832">Ubl conjugation</keyword>
<keyword id="KW-0862">Zinc</keyword>
<keyword id="KW-0863">Zinc-finger</keyword>
<protein>
    <recommendedName>
        <fullName>Zinc finger protein 280D</fullName>
    </recommendedName>
    <alternativeName>
        <fullName>Suppressor of hairy wing homolog 4</fullName>
    </alternativeName>
</protein>
<organism>
    <name type="scientific">Mus musculus</name>
    <name type="common">Mouse</name>
    <dbReference type="NCBI Taxonomy" id="10090"/>
    <lineage>
        <taxon>Eukaryota</taxon>
        <taxon>Metazoa</taxon>
        <taxon>Chordata</taxon>
        <taxon>Craniata</taxon>
        <taxon>Vertebrata</taxon>
        <taxon>Euteleostomi</taxon>
        <taxon>Mammalia</taxon>
        <taxon>Eutheria</taxon>
        <taxon>Euarchontoglires</taxon>
        <taxon>Glires</taxon>
        <taxon>Rodentia</taxon>
        <taxon>Myomorpha</taxon>
        <taxon>Muroidea</taxon>
        <taxon>Muridae</taxon>
        <taxon>Murinae</taxon>
        <taxon>Mus</taxon>
        <taxon>Mus</taxon>
    </lineage>
</organism>